<accession>Q8U7H6</accession>
<keyword id="KW-0030">Aminoacyl-tRNA synthetase</keyword>
<keyword id="KW-0067">ATP-binding</keyword>
<keyword id="KW-0963">Cytoplasm</keyword>
<keyword id="KW-0436">Ligase</keyword>
<keyword id="KW-0460">Magnesium</keyword>
<keyword id="KW-0479">Metal-binding</keyword>
<keyword id="KW-0547">Nucleotide-binding</keyword>
<keyword id="KW-0648">Protein biosynthesis</keyword>
<keyword id="KW-1185">Reference proteome</keyword>
<feature type="chain" id="PRO_0000152593" description="Lysine--tRNA ligase">
    <location>
        <begin position="1"/>
        <end position="499"/>
    </location>
</feature>
<feature type="binding site" evidence="1">
    <location>
        <position position="408"/>
    </location>
    <ligand>
        <name>Mg(2+)</name>
        <dbReference type="ChEBI" id="CHEBI:18420"/>
        <label>1</label>
    </ligand>
</feature>
<feature type="binding site" evidence="1">
    <location>
        <position position="415"/>
    </location>
    <ligand>
        <name>Mg(2+)</name>
        <dbReference type="ChEBI" id="CHEBI:18420"/>
        <label>1</label>
    </ligand>
</feature>
<feature type="binding site" evidence="1">
    <location>
        <position position="415"/>
    </location>
    <ligand>
        <name>Mg(2+)</name>
        <dbReference type="ChEBI" id="CHEBI:18420"/>
        <label>2</label>
    </ligand>
</feature>
<gene>
    <name evidence="1" type="primary">lysS</name>
    <name type="ordered locus">Atu4473</name>
    <name type="ORF">AGR_L_794</name>
</gene>
<comment type="catalytic activity">
    <reaction evidence="1">
        <text>tRNA(Lys) + L-lysine + ATP = L-lysyl-tRNA(Lys) + AMP + diphosphate</text>
        <dbReference type="Rhea" id="RHEA:20792"/>
        <dbReference type="Rhea" id="RHEA-COMP:9696"/>
        <dbReference type="Rhea" id="RHEA-COMP:9697"/>
        <dbReference type="ChEBI" id="CHEBI:30616"/>
        <dbReference type="ChEBI" id="CHEBI:32551"/>
        <dbReference type="ChEBI" id="CHEBI:33019"/>
        <dbReference type="ChEBI" id="CHEBI:78442"/>
        <dbReference type="ChEBI" id="CHEBI:78529"/>
        <dbReference type="ChEBI" id="CHEBI:456215"/>
        <dbReference type="EC" id="6.1.1.6"/>
    </reaction>
</comment>
<comment type="cofactor">
    <cofactor evidence="1">
        <name>Mg(2+)</name>
        <dbReference type="ChEBI" id="CHEBI:18420"/>
    </cofactor>
    <text evidence="1">Binds 3 Mg(2+) ions per subunit.</text>
</comment>
<comment type="subunit">
    <text evidence="1">Homodimer.</text>
</comment>
<comment type="subcellular location">
    <subcellularLocation>
        <location evidence="1">Cytoplasm</location>
    </subcellularLocation>
</comment>
<comment type="similarity">
    <text evidence="1">Belongs to the class-II aminoacyl-tRNA synthetase family.</text>
</comment>
<organism>
    <name type="scientific">Agrobacterium fabrum (strain C58 / ATCC 33970)</name>
    <name type="common">Agrobacterium tumefaciens (strain C58)</name>
    <dbReference type="NCBI Taxonomy" id="176299"/>
    <lineage>
        <taxon>Bacteria</taxon>
        <taxon>Pseudomonadati</taxon>
        <taxon>Pseudomonadota</taxon>
        <taxon>Alphaproteobacteria</taxon>
        <taxon>Hyphomicrobiales</taxon>
        <taxon>Rhizobiaceae</taxon>
        <taxon>Rhizobium/Agrobacterium group</taxon>
        <taxon>Agrobacterium</taxon>
        <taxon>Agrobacterium tumefaciens complex</taxon>
    </lineage>
</organism>
<name>SYK_AGRFC</name>
<proteinExistence type="inferred from homology"/>
<evidence type="ECO:0000255" key="1">
    <source>
        <dbReference type="HAMAP-Rule" id="MF_00252"/>
    </source>
</evidence>
<dbReference type="EC" id="6.1.1.6" evidence="1"/>
<dbReference type="EMBL" id="AE007870">
    <property type="protein sequence ID" value="AAK88969.1"/>
    <property type="molecule type" value="Genomic_DNA"/>
</dbReference>
<dbReference type="PIR" id="AE3106">
    <property type="entry name" value="AE3106"/>
</dbReference>
<dbReference type="PIR" id="G98180">
    <property type="entry name" value="G98180"/>
</dbReference>
<dbReference type="RefSeq" id="NP_356184.1">
    <property type="nucleotide sequence ID" value="NC_003063.2"/>
</dbReference>
<dbReference type="RefSeq" id="WP_010973881.1">
    <property type="nucleotide sequence ID" value="NC_003063.2"/>
</dbReference>
<dbReference type="SMR" id="Q8U7H6"/>
<dbReference type="STRING" id="176299.Atu4473"/>
<dbReference type="EnsemblBacteria" id="AAK88969">
    <property type="protein sequence ID" value="AAK88969"/>
    <property type="gene ID" value="Atu4473"/>
</dbReference>
<dbReference type="GeneID" id="1136347"/>
<dbReference type="KEGG" id="atu:Atu4473"/>
<dbReference type="PATRIC" id="fig|176299.10.peg.4281"/>
<dbReference type="eggNOG" id="COG1190">
    <property type="taxonomic scope" value="Bacteria"/>
</dbReference>
<dbReference type="HOGENOM" id="CLU_008255_6_0_5"/>
<dbReference type="OrthoDB" id="9801152at2"/>
<dbReference type="PhylomeDB" id="Q8U7H6"/>
<dbReference type="BioCyc" id="AGRO:ATU4473-MONOMER"/>
<dbReference type="Proteomes" id="UP000000813">
    <property type="component" value="Chromosome linear"/>
</dbReference>
<dbReference type="GO" id="GO:0005829">
    <property type="term" value="C:cytosol"/>
    <property type="evidence" value="ECO:0007669"/>
    <property type="project" value="TreeGrafter"/>
</dbReference>
<dbReference type="GO" id="GO:0005524">
    <property type="term" value="F:ATP binding"/>
    <property type="evidence" value="ECO:0007669"/>
    <property type="project" value="UniProtKB-UniRule"/>
</dbReference>
<dbReference type="GO" id="GO:0004824">
    <property type="term" value="F:lysine-tRNA ligase activity"/>
    <property type="evidence" value="ECO:0007669"/>
    <property type="project" value="UniProtKB-UniRule"/>
</dbReference>
<dbReference type="GO" id="GO:0000287">
    <property type="term" value="F:magnesium ion binding"/>
    <property type="evidence" value="ECO:0007669"/>
    <property type="project" value="UniProtKB-UniRule"/>
</dbReference>
<dbReference type="GO" id="GO:0000049">
    <property type="term" value="F:tRNA binding"/>
    <property type="evidence" value="ECO:0007669"/>
    <property type="project" value="TreeGrafter"/>
</dbReference>
<dbReference type="GO" id="GO:0006430">
    <property type="term" value="P:lysyl-tRNA aminoacylation"/>
    <property type="evidence" value="ECO:0007669"/>
    <property type="project" value="UniProtKB-UniRule"/>
</dbReference>
<dbReference type="CDD" id="cd00775">
    <property type="entry name" value="LysRS_core"/>
    <property type="match status" value="1"/>
</dbReference>
<dbReference type="CDD" id="cd04322">
    <property type="entry name" value="LysRS_N"/>
    <property type="match status" value="1"/>
</dbReference>
<dbReference type="Gene3D" id="3.30.930.10">
    <property type="entry name" value="Bira Bifunctional Protein, Domain 2"/>
    <property type="match status" value="1"/>
</dbReference>
<dbReference type="Gene3D" id="2.40.50.140">
    <property type="entry name" value="Nucleic acid-binding proteins"/>
    <property type="match status" value="1"/>
</dbReference>
<dbReference type="HAMAP" id="MF_00252">
    <property type="entry name" value="Lys_tRNA_synth_class2"/>
    <property type="match status" value="1"/>
</dbReference>
<dbReference type="InterPro" id="IPR004364">
    <property type="entry name" value="Aa-tRNA-synt_II"/>
</dbReference>
<dbReference type="InterPro" id="IPR006195">
    <property type="entry name" value="aa-tRNA-synth_II"/>
</dbReference>
<dbReference type="InterPro" id="IPR045864">
    <property type="entry name" value="aa-tRNA-synth_II/BPL/LPL"/>
</dbReference>
<dbReference type="InterPro" id="IPR002313">
    <property type="entry name" value="Lys-tRNA-ligase_II"/>
</dbReference>
<dbReference type="InterPro" id="IPR044136">
    <property type="entry name" value="Lys-tRNA-ligase_II_N"/>
</dbReference>
<dbReference type="InterPro" id="IPR018149">
    <property type="entry name" value="Lys-tRNA-synth_II_C"/>
</dbReference>
<dbReference type="InterPro" id="IPR012340">
    <property type="entry name" value="NA-bd_OB-fold"/>
</dbReference>
<dbReference type="InterPro" id="IPR004365">
    <property type="entry name" value="NA-bd_OB_tRNA"/>
</dbReference>
<dbReference type="NCBIfam" id="TIGR00499">
    <property type="entry name" value="lysS_bact"/>
    <property type="match status" value="1"/>
</dbReference>
<dbReference type="NCBIfam" id="NF001756">
    <property type="entry name" value="PRK00484.1"/>
    <property type="match status" value="1"/>
</dbReference>
<dbReference type="PANTHER" id="PTHR42918:SF15">
    <property type="entry name" value="LYSINE--TRNA LIGASE, CHLOROPLASTIC_MITOCHONDRIAL"/>
    <property type="match status" value="1"/>
</dbReference>
<dbReference type="PANTHER" id="PTHR42918">
    <property type="entry name" value="LYSYL-TRNA SYNTHETASE"/>
    <property type="match status" value="1"/>
</dbReference>
<dbReference type="Pfam" id="PF00152">
    <property type="entry name" value="tRNA-synt_2"/>
    <property type="match status" value="1"/>
</dbReference>
<dbReference type="Pfam" id="PF01336">
    <property type="entry name" value="tRNA_anti-codon"/>
    <property type="match status" value="1"/>
</dbReference>
<dbReference type="PRINTS" id="PR00982">
    <property type="entry name" value="TRNASYNTHLYS"/>
</dbReference>
<dbReference type="SUPFAM" id="SSF55681">
    <property type="entry name" value="Class II aaRS and biotin synthetases"/>
    <property type="match status" value="1"/>
</dbReference>
<dbReference type="SUPFAM" id="SSF50249">
    <property type="entry name" value="Nucleic acid-binding proteins"/>
    <property type="match status" value="1"/>
</dbReference>
<dbReference type="PROSITE" id="PS50862">
    <property type="entry name" value="AA_TRNA_LIGASE_II"/>
    <property type="match status" value="1"/>
</dbReference>
<reference key="1">
    <citation type="journal article" date="2001" name="Science">
        <title>The genome of the natural genetic engineer Agrobacterium tumefaciens C58.</title>
        <authorList>
            <person name="Wood D.W."/>
            <person name="Setubal J.C."/>
            <person name="Kaul R."/>
            <person name="Monks D.E."/>
            <person name="Kitajima J.P."/>
            <person name="Okura V.K."/>
            <person name="Zhou Y."/>
            <person name="Chen L."/>
            <person name="Wood G.E."/>
            <person name="Almeida N.F. Jr."/>
            <person name="Woo L."/>
            <person name="Chen Y."/>
            <person name="Paulsen I.T."/>
            <person name="Eisen J.A."/>
            <person name="Karp P.D."/>
            <person name="Bovee D. Sr."/>
            <person name="Chapman P."/>
            <person name="Clendenning J."/>
            <person name="Deatherage G."/>
            <person name="Gillet W."/>
            <person name="Grant C."/>
            <person name="Kutyavin T."/>
            <person name="Levy R."/>
            <person name="Li M.-J."/>
            <person name="McClelland E."/>
            <person name="Palmieri A."/>
            <person name="Raymond C."/>
            <person name="Rouse G."/>
            <person name="Saenphimmachak C."/>
            <person name="Wu Z."/>
            <person name="Romero P."/>
            <person name="Gordon D."/>
            <person name="Zhang S."/>
            <person name="Yoo H."/>
            <person name="Tao Y."/>
            <person name="Biddle P."/>
            <person name="Jung M."/>
            <person name="Krespan W."/>
            <person name="Perry M."/>
            <person name="Gordon-Kamm B."/>
            <person name="Liao L."/>
            <person name="Kim S."/>
            <person name="Hendrick C."/>
            <person name="Zhao Z.-Y."/>
            <person name="Dolan M."/>
            <person name="Chumley F."/>
            <person name="Tingey S.V."/>
            <person name="Tomb J.-F."/>
            <person name="Gordon M.P."/>
            <person name="Olson M.V."/>
            <person name="Nester E.W."/>
        </authorList>
    </citation>
    <scope>NUCLEOTIDE SEQUENCE [LARGE SCALE GENOMIC DNA]</scope>
    <source>
        <strain>C58 / ATCC 33970</strain>
    </source>
</reference>
<reference key="2">
    <citation type="journal article" date="2001" name="Science">
        <title>Genome sequence of the plant pathogen and biotechnology agent Agrobacterium tumefaciens C58.</title>
        <authorList>
            <person name="Goodner B."/>
            <person name="Hinkle G."/>
            <person name="Gattung S."/>
            <person name="Miller N."/>
            <person name="Blanchard M."/>
            <person name="Qurollo B."/>
            <person name="Goldman B.S."/>
            <person name="Cao Y."/>
            <person name="Askenazi M."/>
            <person name="Halling C."/>
            <person name="Mullin L."/>
            <person name="Houmiel K."/>
            <person name="Gordon J."/>
            <person name="Vaudin M."/>
            <person name="Iartchouk O."/>
            <person name="Epp A."/>
            <person name="Liu F."/>
            <person name="Wollam C."/>
            <person name="Allinger M."/>
            <person name="Doughty D."/>
            <person name="Scott C."/>
            <person name="Lappas C."/>
            <person name="Markelz B."/>
            <person name="Flanagan C."/>
            <person name="Crowell C."/>
            <person name="Gurson J."/>
            <person name="Lomo C."/>
            <person name="Sear C."/>
            <person name="Strub G."/>
            <person name="Cielo C."/>
            <person name="Slater S."/>
        </authorList>
    </citation>
    <scope>NUCLEOTIDE SEQUENCE [LARGE SCALE GENOMIC DNA]</scope>
    <source>
        <strain>C58 / ATCC 33970</strain>
    </source>
</reference>
<sequence>MTDTKTETTALSSDATEVRRQKLALLREQIGDVYPAHFHRTLSNAELAEKYADIEADVETGDTVTVAGRVYSSRNSGMFMDIHDASGKVQIFSHKDTTPEAARNLLPMIDIGDIIGVTGKVRRTKRGELTINAEEITMLTKSLLPMPEKWHGVSDIELRYRKRHLDILANEDSKLRFLQRSKILSGIRRFMEAEGFLEVETPMLQTVYGGATADPFKTFHNTLKMDMYLRIAPELFLKRTLVSGLSDKVFEINRNFRNEGVSTRHNPEFTMMECYWAYADYEDIMGLVERLFETLAIALHGTTEVEFQGQTISFKGPFKRVPMPDAVKEATGIDFLAIKTDEEARAAAKAAGFAVEKDWTWGECLAFIFEEKVEATLIQPSHVTHFPKDISPFAKEVPGEPRLVERFESYCNAWEVGNAFSELNDPEEQRRRMVEQLEQAHARGEKDKQLDDEFLDAIDQGMPPAGGLGIGVDRLIMLLTNAPSIRDVILFPARRNKAD</sequence>
<protein>
    <recommendedName>
        <fullName evidence="1">Lysine--tRNA ligase</fullName>
        <ecNumber evidence="1">6.1.1.6</ecNumber>
    </recommendedName>
    <alternativeName>
        <fullName evidence="1">Lysyl-tRNA synthetase</fullName>
        <shortName evidence="1">LysRS</shortName>
    </alternativeName>
</protein>